<sequence length="134" mass="15117">MFQKLIVITFAIALASANIFDFLNNFNTGGRQQQNQGVRTPQEYESVVLNSQCDKYLCPDTGLCVEAPKFCPCPYPSSQIRCFLPDGRFVCISKPAGEGISEKYNDPKTNWKIDAKDDNIRDCGWVNRAWRGLV</sequence>
<organism>
    <name type="scientific">Candida albicans (strain WO-1)</name>
    <name type="common">Yeast</name>
    <dbReference type="NCBI Taxonomy" id="294748"/>
    <lineage>
        <taxon>Eukaryota</taxon>
        <taxon>Fungi</taxon>
        <taxon>Dikarya</taxon>
        <taxon>Ascomycota</taxon>
        <taxon>Saccharomycotina</taxon>
        <taxon>Pichiomycetes</taxon>
        <taxon>Debaryomycetaceae</taxon>
        <taxon>Candida/Lodderomyces clade</taxon>
        <taxon>Candida</taxon>
    </lineage>
</organism>
<accession>C4YM26</accession>
<gene>
    <name type="primary">LCL2</name>
    <name type="ORF">CAWG_01901</name>
</gene>
<dbReference type="EMBL" id="CM000309">
    <property type="protein sequence ID" value="EEQ43657.1"/>
    <property type="molecule type" value="Genomic_DNA"/>
</dbReference>
<dbReference type="SMR" id="C4YM26"/>
<dbReference type="PaxDb" id="5476-C4YM26"/>
<dbReference type="VEuPathDB" id="FungiDB:CAWG_01901"/>
<dbReference type="HOGENOM" id="CLU_142363_1_0_1"/>
<dbReference type="OMA" id="DNYLCPD"/>
<dbReference type="OrthoDB" id="737at766764"/>
<dbReference type="Proteomes" id="UP000001429">
    <property type="component" value="Chromosome R"/>
</dbReference>
<dbReference type="GO" id="GO:0036503">
    <property type="term" value="P:ERAD pathway"/>
    <property type="evidence" value="ECO:0007669"/>
    <property type="project" value="TreeGrafter"/>
</dbReference>
<dbReference type="CDD" id="cd23996">
    <property type="entry name" value="LCL2-like"/>
    <property type="match status" value="1"/>
</dbReference>
<dbReference type="InterPro" id="IPR034543">
    <property type="entry name" value="LCL2"/>
</dbReference>
<dbReference type="PANTHER" id="PTHR38425">
    <property type="entry name" value="LONG CHRONOLOGICAL LIFESPAN PROTEIN 2"/>
    <property type="match status" value="1"/>
</dbReference>
<dbReference type="PANTHER" id="PTHR38425:SF1">
    <property type="entry name" value="LONG CHRONOLOGICAL LIFESPAN PROTEIN 2"/>
    <property type="match status" value="1"/>
</dbReference>
<keyword id="KW-0732">Signal</keyword>
<reference key="1">
    <citation type="journal article" date="2009" name="Nature">
        <title>Evolution of pathogenicity and sexual reproduction in eight Candida genomes.</title>
        <authorList>
            <person name="Butler G."/>
            <person name="Rasmussen M.D."/>
            <person name="Lin M.F."/>
            <person name="Santos M.A.S."/>
            <person name="Sakthikumar S."/>
            <person name="Munro C.A."/>
            <person name="Rheinbay E."/>
            <person name="Grabherr M."/>
            <person name="Forche A."/>
            <person name="Reedy J.L."/>
            <person name="Agrafioti I."/>
            <person name="Arnaud M.B."/>
            <person name="Bates S."/>
            <person name="Brown A.J.P."/>
            <person name="Brunke S."/>
            <person name="Costanzo M.C."/>
            <person name="Fitzpatrick D.A."/>
            <person name="de Groot P.W.J."/>
            <person name="Harris D."/>
            <person name="Hoyer L.L."/>
            <person name="Hube B."/>
            <person name="Klis F.M."/>
            <person name="Kodira C."/>
            <person name="Lennard N."/>
            <person name="Logue M.E."/>
            <person name="Martin R."/>
            <person name="Neiman A.M."/>
            <person name="Nikolaou E."/>
            <person name="Quail M.A."/>
            <person name="Quinn J."/>
            <person name="Santos M.C."/>
            <person name="Schmitzberger F.F."/>
            <person name="Sherlock G."/>
            <person name="Shah P."/>
            <person name="Silverstein K.A.T."/>
            <person name="Skrzypek M.S."/>
            <person name="Soll D."/>
            <person name="Staggs R."/>
            <person name="Stansfield I."/>
            <person name="Stumpf M.P.H."/>
            <person name="Sudbery P.E."/>
            <person name="Srikantha T."/>
            <person name="Zeng Q."/>
            <person name="Berman J."/>
            <person name="Berriman M."/>
            <person name="Heitman J."/>
            <person name="Gow N.A.R."/>
            <person name="Lorenz M.C."/>
            <person name="Birren B.W."/>
            <person name="Kellis M."/>
            <person name="Cuomo C.A."/>
        </authorList>
    </citation>
    <scope>NUCLEOTIDE SEQUENCE [LARGE SCALE GENOMIC DNA]</scope>
    <source>
        <strain>WO-1</strain>
    </source>
</reference>
<evidence type="ECO:0000250" key="1"/>
<evidence type="ECO:0000255" key="2"/>
<evidence type="ECO:0000305" key="3"/>
<feature type="signal peptide" evidence="2">
    <location>
        <begin position="1"/>
        <end position="17"/>
    </location>
</feature>
<feature type="chain" id="PRO_0000408599" description="Long chronological lifespan protein 2">
    <location>
        <begin position="18"/>
        <end position="134"/>
    </location>
</feature>
<proteinExistence type="inferred from homology"/>
<comment type="function">
    <text evidence="1">Probable component of the endoplasmic reticulum-associated degradation (ERAD) pathway.</text>
</comment>
<comment type="similarity">
    <text evidence="3">Belongs to the LCL2 family.</text>
</comment>
<protein>
    <recommendedName>
        <fullName>Long chronological lifespan protein 2</fullName>
    </recommendedName>
</protein>
<name>LCL2_CANAW</name>